<evidence type="ECO:0000255" key="1"/>
<evidence type="ECO:0000305" key="2"/>
<protein>
    <recommendedName>
        <fullName>CDP-diacylglycerol--serine O-phosphatidyltransferase</fullName>
        <ecNumber>2.7.8.8</ecNumber>
    </recommendedName>
    <alternativeName>
        <fullName>Phosphatidylserine synthase</fullName>
    </alternativeName>
</protein>
<reference key="1">
    <citation type="journal article" date="1998" name="Nature">
        <title>Deciphering the biology of Mycobacterium tuberculosis from the complete genome sequence.</title>
        <authorList>
            <person name="Cole S.T."/>
            <person name="Brosch R."/>
            <person name="Parkhill J."/>
            <person name="Garnier T."/>
            <person name="Churcher C.M."/>
            <person name="Harris D.E."/>
            <person name="Gordon S.V."/>
            <person name="Eiglmeier K."/>
            <person name="Gas S."/>
            <person name="Barry C.E. III"/>
            <person name="Tekaia F."/>
            <person name="Badcock K."/>
            <person name="Basham D."/>
            <person name="Brown D."/>
            <person name="Chillingworth T."/>
            <person name="Connor R."/>
            <person name="Davies R.M."/>
            <person name="Devlin K."/>
            <person name="Feltwell T."/>
            <person name="Gentles S."/>
            <person name="Hamlin N."/>
            <person name="Holroyd S."/>
            <person name="Hornsby T."/>
            <person name="Jagels K."/>
            <person name="Krogh A."/>
            <person name="McLean J."/>
            <person name="Moule S."/>
            <person name="Murphy L.D."/>
            <person name="Oliver S."/>
            <person name="Osborne J."/>
            <person name="Quail M.A."/>
            <person name="Rajandream M.A."/>
            <person name="Rogers J."/>
            <person name="Rutter S."/>
            <person name="Seeger K."/>
            <person name="Skelton S."/>
            <person name="Squares S."/>
            <person name="Squares R."/>
            <person name="Sulston J.E."/>
            <person name="Taylor K."/>
            <person name="Whitehead S."/>
            <person name="Barrell B.G."/>
        </authorList>
    </citation>
    <scope>NUCLEOTIDE SEQUENCE [LARGE SCALE GENOMIC DNA]</scope>
    <source>
        <strain>ATCC 25618 / H37Rv</strain>
    </source>
</reference>
<sequence>MIGKPRGRRGVNLQILPSAMTVLSICAGLTAIKFALEHQPKAAMALIAAAAILDGLDGRVARILDAQSRMGAEIDSLADAVNFGVTPALVLYVSMLSKWPVGWVVVLLYAVCVVLRLARYNALQDDGTQPAYAHEFFVGMPAPAGAVSMIGLLALKMQFGEGWWTSGWFLSFWVTGTSILLVSGIPMKKMHAVSVPPNYAAALLAVLAICAAAAVLAPYLLIWVIIIAYMCHIPFAVRSQRWLAQHPEVWDDKPKQRRAVRRASRRAHPYRPSMARLGLRKPGRRL</sequence>
<feature type="chain" id="PRO_0000056798" description="CDP-diacylglycerol--serine O-phosphatidyltransferase">
    <location>
        <begin position="1"/>
        <end position="286"/>
    </location>
</feature>
<feature type="transmembrane region" description="Helical" evidence="1">
    <location>
        <begin position="15"/>
        <end position="35"/>
    </location>
</feature>
<feature type="transmembrane region" description="Helical" evidence="1">
    <location>
        <begin position="74"/>
        <end position="94"/>
    </location>
</feature>
<feature type="transmembrane region" description="Helical" evidence="1">
    <location>
        <begin position="95"/>
        <end position="115"/>
    </location>
</feature>
<feature type="transmembrane region" description="Helical" evidence="1">
    <location>
        <begin position="135"/>
        <end position="155"/>
    </location>
</feature>
<feature type="transmembrane region" description="Helical" evidence="1">
    <location>
        <begin position="167"/>
        <end position="187"/>
    </location>
</feature>
<feature type="transmembrane region" description="Helical" evidence="1">
    <location>
        <begin position="207"/>
        <end position="227"/>
    </location>
</feature>
<accession>P9WPG1</accession>
<accession>L0T6N4</accession>
<accession>P96282</accession>
<organism>
    <name type="scientific">Mycobacterium tuberculosis (strain ATCC 25618 / H37Rv)</name>
    <dbReference type="NCBI Taxonomy" id="83332"/>
    <lineage>
        <taxon>Bacteria</taxon>
        <taxon>Bacillati</taxon>
        <taxon>Actinomycetota</taxon>
        <taxon>Actinomycetes</taxon>
        <taxon>Mycobacteriales</taxon>
        <taxon>Mycobacteriaceae</taxon>
        <taxon>Mycobacterium</taxon>
        <taxon>Mycobacterium tuberculosis complex</taxon>
    </lineage>
</organism>
<name>PSS_MYCTU</name>
<dbReference type="EC" id="2.7.8.8"/>
<dbReference type="EMBL" id="AL123456">
    <property type="protein sequence ID" value="CCP43167.1"/>
    <property type="molecule type" value="Genomic_DNA"/>
</dbReference>
<dbReference type="PIR" id="B70632">
    <property type="entry name" value="B70632"/>
</dbReference>
<dbReference type="RefSeq" id="NP_214950.1">
    <property type="nucleotide sequence ID" value="NC_000962.3"/>
</dbReference>
<dbReference type="RefSeq" id="WP_003906370.1">
    <property type="nucleotide sequence ID" value="NZ_NVQJ01000002.1"/>
</dbReference>
<dbReference type="SMR" id="P9WPG1"/>
<dbReference type="FunCoup" id="P9WPG1">
    <property type="interactions" value="25"/>
</dbReference>
<dbReference type="STRING" id="83332.Rv0436c"/>
<dbReference type="PaxDb" id="83332-Rv0436c"/>
<dbReference type="DNASU" id="886385"/>
<dbReference type="GeneID" id="886385"/>
<dbReference type="KEGG" id="mtu:Rv0436c"/>
<dbReference type="KEGG" id="mtv:RVBD_0436c"/>
<dbReference type="TubercuList" id="Rv0436c"/>
<dbReference type="eggNOG" id="COG1183">
    <property type="taxonomic scope" value="Bacteria"/>
</dbReference>
<dbReference type="InParanoid" id="P9WPG1"/>
<dbReference type="OrthoDB" id="9777147at2"/>
<dbReference type="PhylomeDB" id="P9WPG1"/>
<dbReference type="Proteomes" id="UP000001584">
    <property type="component" value="Chromosome"/>
</dbReference>
<dbReference type="GO" id="GO:0005576">
    <property type="term" value="C:extracellular region"/>
    <property type="evidence" value="ECO:0007005"/>
    <property type="project" value="MTBBASE"/>
</dbReference>
<dbReference type="GO" id="GO:0005886">
    <property type="term" value="C:plasma membrane"/>
    <property type="evidence" value="ECO:0007669"/>
    <property type="project" value="UniProtKB-SubCell"/>
</dbReference>
<dbReference type="GO" id="GO:0003882">
    <property type="term" value="F:CDP-diacylglycerol-serine O-phosphatidyltransferase activity"/>
    <property type="evidence" value="ECO:0007669"/>
    <property type="project" value="UniProtKB-EC"/>
</dbReference>
<dbReference type="GO" id="GO:0008654">
    <property type="term" value="P:phospholipid biosynthetic process"/>
    <property type="evidence" value="ECO:0007669"/>
    <property type="project" value="UniProtKB-KW"/>
</dbReference>
<dbReference type="FunFam" id="1.20.120.1760:FF:000025">
    <property type="entry name" value="CDP-diacylglycerol--serine o-phosphatidyltransferase PssA"/>
    <property type="match status" value="1"/>
</dbReference>
<dbReference type="Gene3D" id="1.20.120.1760">
    <property type="match status" value="1"/>
</dbReference>
<dbReference type="InterPro" id="IPR050324">
    <property type="entry name" value="CDP-alcohol_PTase-I"/>
</dbReference>
<dbReference type="InterPro" id="IPR004533">
    <property type="entry name" value="CDP-diaglyc--ser_O-PTrfase"/>
</dbReference>
<dbReference type="InterPro" id="IPR000462">
    <property type="entry name" value="CDP-OH_P_trans"/>
</dbReference>
<dbReference type="InterPro" id="IPR043130">
    <property type="entry name" value="CDP-OH_PTrfase_TM_dom"/>
</dbReference>
<dbReference type="InterPro" id="IPR048254">
    <property type="entry name" value="CDP_ALCOHOL_P_TRANSF_CS"/>
</dbReference>
<dbReference type="NCBIfam" id="TIGR00473">
    <property type="entry name" value="pssA"/>
    <property type="match status" value="1"/>
</dbReference>
<dbReference type="PANTHER" id="PTHR14269">
    <property type="entry name" value="CDP-DIACYLGLYCEROL--GLYCEROL-3-PHOSPHATE 3-PHOSPHATIDYLTRANSFERASE-RELATED"/>
    <property type="match status" value="1"/>
</dbReference>
<dbReference type="PANTHER" id="PTHR14269:SF61">
    <property type="entry name" value="CDP-DIACYLGLYCEROL--SERINE O-PHOSPHATIDYLTRANSFERASE"/>
    <property type="match status" value="1"/>
</dbReference>
<dbReference type="Pfam" id="PF01066">
    <property type="entry name" value="CDP-OH_P_transf"/>
    <property type="match status" value="1"/>
</dbReference>
<dbReference type="PROSITE" id="PS00379">
    <property type="entry name" value="CDP_ALCOHOL_P_TRANSF"/>
    <property type="match status" value="1"/>
</dbReference>
<gene>
    <name type="primary">pssA</name>
    <name type="ordered locus">Rv0436c</name>
    <name type="ORF">MTCY22G10.33c</name>
</gene>
<keyword id="KW-1003">Cell membrane</keyword>
<keyword id="KW-0444">Lipid biosynthesis</keyword>
<keyword id="KW-0443">Lipid metabolism</keyword>
<keyword id="KW-0472">Membrane</keyword>
<keyword id="KW-0594">Phospholipid biosynthesis</keyword>
<keyword id="KW-1208">Phospholipid metabolism</keyword>
<keyword id="KW-1185">Reference proteome</keyword>
<keyword id="KW-0808">Transferase</keyword>
<keyword id="KW-0812">Transmembrane</keyword>
<keyword id="KW-1133">Transmembrane helix</keyword>
<proteinExistence type="inferred from homology"/>
<comment type="catalytic activity">
    <reaction>
        <text>a CDP-1,2-diacyl-sn-glycerol + L-serine = a 1,2-diacyl-sn-glycero-3-phospho-L-serine + CMP + H(+)</text>
        <dbReference type="Rhea" id="RHEA:16913"/>
        <dbReference type="ChEBI" id="CHEBI:15378"/>
        <dbReference type="ChEBI" id="CHEBI:33384"/>
        <dbReference type="ChEBI" id="CHEBI:57262"/>
        <dbReference type="ChEBI" id="CHEBI:58332"/>
        <dbReference type="ChEBI" id="CHEBI:60377"/>
        <dbReference type="EC" id="2.7.8.8"/>
    </reaction>
</comment>
<comment type="subcellular location">
    <subcellularLocation>
        <location evidence="2">Cell membrane</location>
        <topology evidence="2">Multi-pass membrane protein</topology>
    </subcellularLocation>
</comment>
<comment type="similarity">
    <text evidence="2">Belongs to the CDP-alcohol phosphatidyltransferase class-I family.</text>
</comment>